<organism>
    <name type="scientific">Dictyostelium discoideum</name>
    <name type="common">Social amoeba</name>
    <dbReference type="NCBI Taxonomy" id="44689"/>
    <lineage>
        <taxon>Eukaryota</taxon>
        <taxon>Amoebozoa</taxon>
        <taxon>Evosea</taxon>
        <taxon>Eumycetozoa</taxon>
        <taxon>Dictyostelia</taxon>
        <taxon>Dictyosteliales</taxon>
        <taxon>Dictyosteliaceae</taxon>
        <taxon>Dictyostelium</taxon>
    </lineage>
</organism>
<protein>
    <recommendedName>
        <fullName>Putative uncharacterized protein DDB_G0283461</fullName>
    </recommendedName>
</protein>
<name>Y5534_DICDI</name>
<sequence length="64" mass="7742">MMSTSYYQHIGYQDISVSKYKYICDPKDKVILNSVSWEEYKVKNNINRINDYINPHYPIHKLLE</sequence>
<accession>Q54R03</accession>
<proteinExistence type="predicted"/>
<keyword id="KW-1185">Reference proteome</keyword>
<gene>
    <name type="ORF">DDB_G0283461</name>
</gene>
<reference key="1">
    <citation type="journal article" date="2005" name="Nature">
        <title>The genome of the social amoeba Dictyostelium discoideum.</title>
        <authorList>
            <person name="Eichinger L."/>
            <person name="Pachebat J.A."/>
            <person name="Gloeckner G."/>
            <person name="Rajandream M.A."/>
            <person name="Sucgang R."/>
            <person name="Berriman M."/>
            <person name="Song J."/>
            <person name="Olsen R."/>
            <person name="Szafranski K."/>
            <person name="Xu Q."/>
            <person name="Tunggal B."/>
            <person name="Kummerfeld S."/>
            <person name="Madera M."/>
            <person name="Konfortov B.A."/>
            <person name="Rivero F."/>
            <person name="Bankier A.T."/>
            <person name="Lehmann R."/>
            <person name="Hamlin N."/>
            <person name="Davies R."/>
            <person name="Gaudet P."/>
            <person name="Fey P."/>
            <person name="Pilcher K."/>
            <person name="Chen G."/>
            <person name="Saunders D."/>
            <person name="Sodergren E.J."/>
            <person name="Davis P."/>
            <person name="Kerhornou A."/>
            <person name="Nie X."/>
            <person name="Hall N."/>
            <person name="Anjard C."/>
            <person name="Hemphill L."/>
            <person name="Bason N."/>
            <person name="Farbrother P."/>
            <person name="Desany B."/>
            <person name="Just E."/>
            <person name="Morio T."/>
            <person name="Rost R."/>
            <person name="Churcher C.M."/>
            <person name="Cooper J."/>
            <person name="Haydock S."/>
            <person name="van Driessche N."/>
            <person name="Cronin A."/>
            <person name="Goodhead I."/>
            <person name="Muzny D.M."/>
            <person name="Mourier T."/>
            <person name="Pain A."/>
            <person name="Lu M."/>
            <person name="Harper D."/>
            <person name="Lindsay R."/>
            <person name="Hauser H."/>
            <person name="James K.D."/>
            <person name="Quiles M."/>
            <person name="Madan Babu M."/>
            <person name="Saito T."/>
            <person name="Buchrieser C."/>
            <person name="Wardroper A."/>
            <person name="Felder M."/>
            <person name="Thangavelu M."/>
            <person name="Johnson D."/>
            <person name="Knights A."/>
            <person name="Loulseged H."/>
            <person name="Mungall K.L."/>
            <person name="Oliver K."/>
            <person name="Price C."/>
            <person name="Quail M.A."/>
            <person name="Urushihara H."/>
            <person name="Hernandez J."/>
            <person name="Rabbinowitsch E."/>
            <person name="Steffen D."/>
            <person name="Sanders M."/>
            <person name="Ma J."/>
            <person name="Kohara Y."/>
            <person name="Sharp S."/>
            <person name="Simmonds M.N."/>
            <person name="Spiegler S."/>
            <person name="Tivey A."/>
            <person name="Sugano S."/>
            <person name="White B."/>
            <person name="Walker D."/>
            <person name="Woodward J.R."/>
            <person name="Winckler T."/>
            <person name="Tanaka Y."/>
            <person name="Shaulsky G."/>
            <person name="Schleicher M."/>
            <person name="Weinstock G.M."/>
            <person name="Rosenthal A."/>
            <person name="Cox E.C."/>
            <person name="Chisholm R.L."/>
            <person name="Gibbs R.A."/>
            <person name="Loomis W.F."/>
            <person name="Platzer M."/>
            <person name="Kay R.R."/>
            <person name="Williams J.G."/>
            <person name="Dear P.H."/>
            <person name="Noegel A.A."/>
            <person name="Barrell B.G."/>
            <person name="Kuspa A."/>
        </authorList>
    </citation>
    <scope>NUCLEOTIDE SEQUENCE [LARGE SCALE GENOMIC DNA]</scope>
    <source>
        <strain>AX4</strain>
    </source>
</reference>
<feature type="chain" id="PRO_0000350879" description="Putative uncharacterized protein DDB_G0283461">
    <location>
        <begin position="1"/>
        <end position="64"/>
    </location>
</feature>
<dbReference type="EMBL" id="AAFI02000055">
    <property type="protein sequence ID" value="EAL65715.1"/>
    <property type="molecule type" value="Genomic_DNA"/>
</dbReference>
<dbReference type="RefSeq" id="XP_639088.1">
    <property type="nucleotide sequence ID" value="XM_633996.1"/>
</dbReference>
<dbReference type="PaxDb" id="44689-DDB0185534"/>
<dbReference type="EnsemblProtists" id="EAL65715">
    <property type="protein sequence ID" value="EAL65715"/>
    <property type="gene ID" value="DDB_G0283461"/>
</dbReference>
<dbReference type="GeneID" id="8624112"/>
<dbReference type="KEGG" id="ddi:DDB_G0283461"/>
<dbReference type="dictyBase" id="DDB_G0283461"/>
<dbReference type="VEuPathDB" id="AmoebaDB:DDB_G0283461"/>
<dbReference type="HOGENOM" id="CLU_2872321_0_0_1"/>
<dbReference type="InParanoid" id="Q54R03"/>
<dbReference type="PRO" id="PR:Q54R03"/>
<dbReference type="Proteomes" id="UP000002195">
    <property type="component" value="Chromosome 4"/>
</dbReference>